<protein>
    <recommendedName>
        <fullName evidence="1">Disulfide bond formation protein B 1</fullName>
    </recommendedName>
    <alternativeName>
        <fullName evidence="1">Disulfide oxidoreductase 1</fullName>
    </alternativeName>
</protein>
<organism>
    <name type="scientific">Pseudomonas entomophila (strain L48)</name>
    <dbReference type="NCBI Taxonomy" id="384676"/>
    <lineage>
        <taxon>Bacteria</taxon>
        <taxon>Pseudomonadati</taxon>
        <taxon>Pseudomonadota</taxon>
        <taxon>Gammaproteobacteria</taxon>
        <taxon>Pseudomonadales</taxon>
        <taxon>Pseudomonadaceae</taxon>
        <taxon>Pseudomonas</taxon>
    </lineage>
</organism>
<proteinExistence type="inferred from homology"/>
<evidence type="ECO:0000255" key="1">
    <source>
        <dbReference type="HAMAP-Rule" id="MF_00286"/>
    </source>
</evidence>
<keyword id="KW-0997">Cell inner membrane</keyword>
<keyword id="KW-1003">Cell membrane</keyword>
<keyword id="KW-0143">Chaperone</keyword>
<keyword id="KW-1015">Disulfide bond</keyword>
<keyword id="KW-0249">Electron transport</keyword>
<keyword id="KW-0472">Membrane</keyword>
<keyword id="KW-0560">Oxidoreductase</keyword>
<keyword id="KW-0676">Redox-active center</keyword>
<keyword id="KW-0812">Transmembrane</keyword>
<keyword id="KW-1133">Transmembrane helix</keyword>
<keyword id="KW-0813">Transport</keyword>
<gene>
    <name evidence="1" type="primary">dsbB1</name>
    <name type="ordered locus">PSEEN0954</name>
</gene>
<dbReference type="EMBL" id="CT573326">
    <property type="protein sequence ID" value="CAK13859.1"/>
    <property type="molecule type" value="Genomic_DNA"/>
</dbReference>
<dbReference type="RefSeq" id="WP_011532285.1">
    <property type="nucleotide sequence ID" value="NC_008027.1"/>
</dbReference>
<dbReference type="SMR" id="Q1IEP6"/>
<dbReference type="STRING" id="384676.PSEEN0954"/>
<dbReference type="GeneID" id="32804253"/>
<dbReference type="KEGG" id="pen:PSEEN0954"/>
<dbReference type="eggNOG" id="COG1495">
    <property type="taxonomic scope" value="Bacteria"/>
</dbReference>
<dbReference type="HOGENOM" id="CLU_098660_1_0_6"/>
<dbReference type="OrthoDB" id="3711263at2"/>
<dbReference type="Proteomes" id="UP000000658">
    <property type="component" value="Chromosome"/>
</dbReference>
<dbReference type="GO" id="GO:0005886">
    <property type="term" value="C:plasma membrane"/>
    <property type="evidence" value="ECO:0007669"/>
    <property type="project" value="UniProtKB-SubCell"/>
</dbReference>
<dbReference type="GO" id="GO:0009055">
    <property type="term" value="F:electron transfer activity"/>
    <property type="evidence" value="ECO:0007669"/>
    <property type="project" value="UniProtKB-UniRule"/>
</dbReference>
<dbReference type="GO" id="GO:0015035">
    <property type="term" value="F:protein-disulfide reductase activity"/>
    <property type="evidence" value="ECO:0007669"/>
    <property type="project" value="UniProtKB-UniRule"/>
</dbReference>
<dbReference type="GO" id="GO:0006457">
    <property type="term" value="P:protein folding"/>
    <property type="evidence" value="ECO:0007669"/>
    <property type="project" value="InterPro"/>
</dbReference>
<dbReference type="Gene3D" id="1.20.1550.10">
    <property type="entry name" value="DsbB-like"/>
    <property type="match status" value="1"/>
</dbReference>
<dbReference type="HAMAP" id="MF_00286">
    <property type="entry name" value="DsbB"/>
    <property type="match status" value="1"/>
</dbReference>
<dbReference type="InterPro" id="IPR003752">
    <property type="entry name" value="DiS_bond_form_DsbB/BdbC"/>
</dbReference>
<dbReference type="InterPro" id="IPR022920">
    <property type="entry name" value="Disulphide_bond_form_DsbB"/>
</dbReference>
<dbReference type="InterPro" id="IPR050183">
    <property type="entry name" value="DsbB"/>
</dbReference>
<dbReference type="InterPro" id="IPR023380">
    <property type="entry name" value="DsbB-like_sf"/>
</dbReference>
<dbReference type="NCBIfam" id="NF002552">
    <property type="entry name" value="PRK02110.1"/>
    <property type="match status" value="1"/>
</dbReference>
<dbReference type="PANTHER" id="PTHR36570">
    <property type="entry name" value="DISULFIDE BOND FORMATION PROTEIN B"/>
    <property type="match status" value="1"/>
</dbReference>
<dbReference type="PANTHER" id="PTHR36570:SF3">
    <property type="entry name" value="DISULFIDE BOND FORMATION PROTEIN B"/>
    <property type="match status" value="1"/>
</dbReference>
<dbReference type="Pfam" id="PF02600">
    <property type="entry name" value="DsbB"/>
    <property type="match status" value="1"/>
</dbReference>
<dbReference type="SUPFAM" id="SSF158442">
    <property type="entry name" value="DsbB-like"/>
    <property type="match status" value="1"/>
</dbReference>
<name>DSBB1_PSEE4</name>
<comment type="function">
    <text evidence="1">Required for disulfide bond formation in some periplasmic proteins. Acts by oxidizing the DsbA protein.</text>
</comment>
<comment type="subcellular location">
    <subcellularLocation>
        <location evidence="1">Cell inner membrane</location>
        <topology evidence="1">Multi-pass membrane protein</topology>
    </subcellularLocation>
</comment>
<comment type="similarity">
    <text evidence="1">Belongs to the DsbB family.</text>
</comment>
<reference key="1">
    <citation type="journal article" date="2006" name="Nat. Biotechnol.">
        <title>Complete genome sequence of the entomopathogenic and metabolically versatile soil bacterium Pseudomonas entomophila.</title>
        <authorList>
            <person name="Vodovar N."/>
            <person name="Vallenet D."/>
            <person name="Cruveiller S."/>
            <person name="Rouy Z."/>
            <person name="Barbe V."/>
            <person name="Acosta C."/>
            <person name="Cattolico L."/>
            <person name="Jubin C."/>
            <person name="Lajus A."/>
            <person name="Segurens B."/>
            <person name="Vacherie B."/>
            <person name="Wincker P."/>
            <person name="Weissenbach J."/>
            <person name="Lemaitre B."/>
            <person name="Medigue C."/>
            <person name="Boccard F."/>
        </authorList>
    </citation>
    <scope>NUCLEOTIDE SEQUENCE [LARGE SCALE GENOMIC DNA]</scope>
    <source>
        <strain>L48</strain>
    </source>
</reference>
<sequence length="168" mass="18272">MNELTSRLNRERRFLVLLGVICLALIGGALYMQVVLGEAPCPLCILQRYALLFIAIFAFIAAAMPGRKSLTFFEVLVVLSAIGGIVAAGNHVYILANPMVSCGIDTLQPIVDDLPLAKLWPLAFQVDGFCSTPYPPILGLSLAQWALVAFVLTTVLVPLGIYRNRRRG</sequence>
<feature type="chain" id="PRO_0000298385" description="Disulfide bond formation protein B 1">
    <location>
        <begin position="1"/>
        <end position="168"/>
    </location>
</feature>
<feature type="topological domain" description="Cytoplasmic" evidence="1">
    <location>
        <begin position="1"/>
        <end position="14"/>
    </location>
</feature>
<feature type="transmembrane region" description="Helical" evidence="1">
    <location>
        <begin position="15"/>
        <end position="31"/>
    </location>
</feature>
<feature type="topological domain" description="Periplasmic" evidence="1">
    <location>
        <begin position="32"/>
        <end position="49"/>
    </location>
</feature>
<feature type="transmembrane region" description="Helical" evidence="1">
    <location>
        <begin position="50"/>
        <end position="65"/>
    </location>
</feature>
<feature type="topological domain" description="Cytoplasmic" evidence="1">
    <location>
        <begin position="66"/>
        <end position="72"/>
    </location>
</feature>
<feature type="transmembrane region" description="Helical" evidence="1">
    <location>
        <begin position="73"/>
        <end position="89"/>
    </location>
</feature>
<feature type="topological domain" description="Periplasmic" evidence="1">
    <location>
        <begin position="90"/>
        <end position="144"/>
    </location>
</feature>
<feature type="transmembrane region" description="Helical" evidence="1">
    <location>
        <begin position="145"/>
        <end position="163"/>
    </location>
</feature>
<feature type="topological domain" description="Cytoplasmic" evidence="1">
    <location>
        <begin position="164"/>
        <end position="168"/>
    </location>
</feature>
<feature type="disulfide bond" description="Redox-active" evidence="1">
    <location>
        <begin position="41"/>
        <end position="44"/>
    </location>
</feature>
<feature type="disulfide bond" description="Redox-active" evidence="1">
    <location>
        <begin position="102"/>
        <end position="130"/>
    </location>
</feature>
<accession>Q1IEP6</accession>